<evidence type="ECO:0000255" key="1">
    <source>
        <dbReference type="HAMAP-Rule" id="MF_01815"/>
    </source>
</evidence>
<name>FABH_NITV2</name>
<dbReference type="EC" id="2.3.1.180" evidence="1"/>
<dbReference type="EMBL" id="AE017285">
    <property type="protein sequence ID" value="AAS95685.1"/>
    <property type="molecule type" value="Genomic_DNA"/>
</dbReference>
<dbReference type="RefSeq" id="WP_010938503.1">
    <property type="nucleotide sequence ID" value="NC_002937.3"/>
</dbReference>
<dbReference type="RefSeq" id="YP_010426.1">
    <property type="nucleotide sequence ID" value="NC_002937.3"/>
</dbReference>
<dbReference type="SMR" id="Q72CS6"/>
<dbReference type="STRING" id="882.DVU_1207"/>
<dbReference type="PaxDb" id="882-DVU_1207"/>
<dbReference type="EnsemblBacteria" id="AAS95685">
    <property type="protein sequence ID" value="AAS95685"/>
    <property type="gene ID" value="DVU_1207"/>
</dbReference>
<dbReference type="KEGG" id="dvu:DVU_1207"/>
<dbReference type="PATRIC" id="fig|882.5.peg.1131"/>
<dbReference type="eggNOG" id="COG0332">
    <property type="taxonomic scope" value="Bacteria"/>
</dbReference>
<dbReference type="HOGENOM" id="CLU_039592_4_1_7"/>
<dbReference type="OrthoDB" id="9815506at2"/>
<dbReference type="PhylomeDB" id="Q72CS6"/>
<dbReference type="UniPathway" id="UPA00094"/>
<dbReference type="Proteomes" id="UP000002194">
    <property type="component" value="Chromosome"/>
</dbReference>
<dbReference type="GO" id="GO:0005737">
    <property type="term" value="C:cytoplasm"/>
    <property type="evidence" value="ECO:0007669"/>
    <property type="project" value="UniProtKB-SubCell"/>
</dbReference>
<dbReference type="GO" id="GO:0004315">
    <property type="term" value="F:3-oxoacyl-[acyl-carrier-protein] synthase activity"/>
    <property type="evidence" value="ECO:0007669"/>
    <property type="project" value="InterPro"/>
</dbReference>
<dbReference type="GO" id="GO:0033818">
    <property type="term" value="F:beta-ketoacyl-acyl-carrier-protein synthase III activity"/>
    <property type="evidence" value="ECO:0007669"/>
    <property type="project" value="UniProtKB-UniRule"/>
</dbReference>
<dbReference type="GO" id="GO:0006633">
    <property type="term" value="P:fatty acid biosynthetic process"/>
    <property type="evidence" value="ECO:0007669"/>
    <property type="project" value="UniProtKB-UniRule"/>
</dbReference>
<dbReference type="GO" id="GO:0044550">
    <property type="term" value="P:secondary metabolite biosynthetic process"/>
    <property type="evidence" value="ECO:0007669"/>
    <property type="project" value="TreeGrafter"/>
</dbReference>
<dbReference type="CDD" id="cd00830">
    <property type="entry name" value="KAS_III"/>
    <property type="match status" value="1"/>
</dbReference>
<dbReference type="FunFam" id="3.40.47.10:FF:000004">
    <property type="entry name" value="3-oxoacyl-[acyl-carrier-protein] synthase 3"/>
    <property type="match status" value="1"/>
</dbReference>
<dbReference type="Gene3D" id="3.40.47.10">
    <property type="match status" value="1"/>
</dbReference>
<dbReference type="HAMAP" id="MF_01815">
    <property type="entry name" value="FabH"/>
    <property type="match status" value="1"/>
</dbReference>
<dbReference type="InterPro" id="IPR013747">
    <property type="entry name" value="ACP_syn_III_C"/>
</dbReference>
<dbReference type="InterPro" id="IPR013751">
    <property type="entry name" value="ACP_syn_III_N"/>
</dbReference>
<dbReference type="InterPro" id="IPR004655">
    <property type="entry name" value="FabH"/>
</dbReference>
<dbReference type="InterPro" id="IPR016039">
    <property type="entry name" value="Thiolase-like"/>
</dbReference>
<dbReference type="NCBIfam" id="TIGR00747">
    <property type="entry name" value="fabH"/>
    <property type="match status" value="1"/>
</dbReference>
<dbReference type="NCBIfam" id="NF006829">
    <property type="entry name" value="PRK09352.1"/>
    <property type="match status" value="1"/>
</dbReference>
<dbReference type="PANTHER" id="PTHR34069">
    <property type="entry name" value="3-OXOACYL-[ACYL-CARRIER-PROTEIN] SYNTHASE 3"/>
    <property type="match status" value="1"/>
</dbReference>
<dbReference type="PANTHER" id="PTHR34069:SF2">
    <property type="entry name" value="BETA-KETOACYL-[ACYL-CARRIER-PROTEIN] SYNTHASE III"/>
    <property type="match status" value="1"/>
</dbReference>
<dbReference type="Pfam" id="PF08545">
    <property type="entry name" value="ACP_syn_III"/>
    <property type="match status" value="1"/>
</dbReference>
<dbReference type="Pfam" id="PF08541">
    <property type="entry name" value="ACP_syn_III_C"/>
    <property type="match status" value="1"/>
</dbReference>
<dbReference type="SUPFAM" id="SSF53901">
    <property type="entry name" value="Thiolase-like"/>
    <property type="match status" value="1"/>
</dbReference>
<organism>
    <name type="scientific">Nitratidesulfovibrio vulgaris (strain ATCC 29579 / DSM 644 / CCUG 34227 / NCIMB 8303 / VKM B-1760 / Hildenborough)</name>
    <name type="common">Desulfovibrio vulgaris</name>
    <dbReference type="NCBI Taxonomy" id="882"/>
    <lineage>
        <taxon>Bacteria</taxon>
        <taxon>Pseudomonadati</taxon>
        <taxon>Thermodesulfobacteriota</taxon>
        <taxon>Desulfovibrionia</taxon>
        <taxon>Desulfovibrionales</taxon>
        <taxon>Desulfovibrionaceae</taxon>
        <taxon>Nitratidesulfovibrio</taxon>
    </lineage>
</organism>
<keyword id="KW-0012">Acyltransferase</keyword>
<keyword id="KW-0963">Cytoplasm</keyword>
<keyword id="KW-0275">Fatty acid biosynthesis</keyword>
<keyword id="KW-0276">Fatty acid metabolism</keyword>
<keyword id="KW-0444">Lipid biosynthesis</keyword>
<keyword id="KW-0443">Lipid metabolism</keyword>
<keyword id="KW-0511">Multifunctional enzyme</keyword>
<keyword id="KW-1185">Reference proteome</keyword>
<keyword id="KW-0808">Transferase</keyword>
<proteinExistence type="inferred from homology"/>
<comment type="function">
    <text evidence="1">Catalyzes the condensation reaction of fatty acid synthesis by the addition to an acyl acceptor of two carbons from malonyl-ACP. Catalyzes the first condensation reaction which initiates fatty acid synthesis and may therefore play a role in governing the total rate of fatty acid production. Possesses both acetoacetyl-ACP synthase and acetyl transacylase activities. Its substrate specificity determines the biosynthesis of branched-chain and/or straight-chain of fatty acids.</text>
</comment>
<comment type="catalytic activity">
    <reaction evidence="1">
        <text>malonyl-[ACP] + acetyl-CoA + H(+) = 3-oxobutanoyl-[ACP] + CO2 + CoA</text>
        <dbReference type="Rhea" id="RHEA:12080"/>
        <dbReference type="Rhea" id="RHEA-COMP:9623"/>
        <dbReference type="Rhea" id="RHEA-COMP:9625"/>
        <dbReference type="ChEBI" id="CHEBI:15378"/>
        <dbReference type="ChEBI" id="CHEBI:16526"/>
        <dbReference type="ChEBI" id="CHEBI:57287"/>
        <dbReference type="ChEBI" id="CHEBI:57288"/>
        <dbReference type="ChEBI" id="CHEBI:78449"/>
        <dbReference type="ChEBI" id="CHEBI:78450"/>
        <dbReference type="EC" id="2.3.1.180"/>
    </reaction>
</comment>
<comment type="pathway">
    <text evidence="1">Lipid metabolism; fatty acid biosynthesis.</text>
</comment>
<comment type="subunit">
    <text evidence="1">Homodimer.</text>
</comment>
<comment type="subcellular location">
    <subcellularLocation>
        <location evidence="1">Cytoplasm</location>
    </subcellularLocation>
</comment>
<comment type="domain">
    <text evidence="1">The last Arg residue of the ACP-binding site is essential for the weak association between ACP/AcpP and FabH.</text>
</comment>
<comment type="similarity">
    <text evidence="1">Belongs to the thiolase-like superfamily. FabH family.</text>
</comment>
<feature type="chain" id="PRO_1000056352" description="Beta-ketoacyl-[acyl-carrier-protein] synthase III">
    <location>
        <begin position="1"/>
        <end position="330"/>
    </location>
</feature>
<feature type="region of interest" description="ACP-binding" evidence="1">
    <location>
        <begin position="258"/>
        <end position="262"/>
    </location>
</feature>
<feature type="active site" evidence="1">
    <location>
        <position position="114"/>
    </location>
</feature>
<feature type="active site" evidence="1">
    <location>
        <position position="257"/>
    </location>
</feature>
<feature type="active site" evidence="1">
    <location>
        <position position="287"/>
    </location>
</feature>
<reference key="1">
    <citation type="journal article" date="2004" name="Nat. Biotechnol.">
        <title>The genome sequence of the anaerobic, sulfate-reducing bacterium Desulfovibrio vulgaris Hildenborough.</title>
        <authorList>
            <person name="Heidelberg J.F."/>
            <person name="Seshadri R."/>
            <person name="Haveman S.A."/>
            <person name="Hemme C.L."/>
            <person name="Paulsen I.T."/>
            <person name="Kolonay J.F."/>
            <person name="Eisen J.A."/>
            <person name="Ward N.L."/>
            <person name="Methe B.A."/>
            <person name="Brinkac L.M."/>
            <person name="Daugherty S.C."/>
            <person name="DeBoy R.T."/>
            <person name="Dodson R.J."/>
            <person name="Durkin A.S."/>
            <person name="Madupu R."/>
            <person name="Nelson W.C."/>
            <person name="Sullivan S.A."/>
            <person name="Fouts D.E."/>
            <person name="Haft D.H."/>
            <person name="Selengut J."/>
            <person name="Peterson J.D."/>
            <person name="Davidsen T.M."/>
            <person name="Zafar N."/>
            <person name="Zhou L."/>
            <person name="Radune D."/>
            <person name="Dimitrov G."/>
            <person name="Hance M."/>
            <person name="Tran K."/>
            <person name="Khouri H.M."/>
            <person name="Gill J."/>
            <person name="Utterback T.R."/>
            <person name="Feldblyum T.V."/>
            <person name="Wall J.D."/>
            <person name="Voordouw G."/>
            <person name="Fraser C.M."/>
        </authorList>
    </citation>
    <scope>NUCLEOTIDE SEQUENCE [LARGE SCALE GENOMIC DNA]</scope>
    <source>
        <strain>ATCC 29579 / DSM 644 / CCUG 34227 / NCIMB 8303 / VKM B-1760 / Hildenborough</strain>
    </source>
</reference>
<accession>Q72CS6</accession>
<protein>
    <recommendedName>
        <fullName evidence="1">Beta-ketoacyl-[acyl-carrier-protein] synthase III</fullName>
        <shortName evidence="1">Beta-ketoacyl-ACP synthase III</shortName>
        <shortName evidence="1">KAS III</shortName>
        <ecNumber evidence="1">2.3.1.180</ecNumber>
    </recommendedName>
    <alternativeName>
        <fullName evidence="1">3-oxoacyl-[acyl-carrier-protein] synthase 3</fullName>
    </alternativeName>
    <alternativeName>
        <fullName evidence="1">3-oxoacyl-[acyl-carrier-protein] synthase III</fullName>
    </alternativeName>
</protein>
<sequence>MTSPSLLRGFGAYAPERILTNADIESMVETTDEWITTRTGIRQRHVVAPGQTTSDLAVEAARAALADAALDTADITHVLVATCTPDASCPNTACIVARKLGMTGVMALDCNAACSGFLYGLELAQGIVAARPASRVLLVAAEALSLRCNWKDRTTCVLFGDGAGATVVTADVDATQGTAVLEDSIVTSDGSLGDLLTIGGGTANPYAIGDSVGEEYFVRMQGRDVFKHAVRSMTQVCNDLLARNGFTTEDVDLVIPHQANLRIIEAVGDRLGFASEKVFVNVHDFGNTSAASIPLALADARAQGRIRPGMRVLLTTFGGGFTWGAALLRF</sequence>
<gene>
    <name evidence="1" type="primary">fabH</name>
    <name type="ordered locus">DVU_1207</name>
</gene>